<keyword id="KW-0238">DNA-binding</keyword>
<keyword id="KW-0423">Lactose metabolism</keyword>
<keyword id="KW-0678">Repressor</keyword>
<keyword id="KW-0804">Transcription</keyword>
<keyword id="KW-0805">Transcription regulation</keyword>
<organism>
    <name type="scientific">Staphylococcus aureus (strain MRSA252)</name>
    <dbReference type="NCBI Taxonomy" id="282458"/>
    <lineage>
        <taxon>Bacteria</taxon>
        <taxon>Bacillati</taxon>
        <taxon>Bacillota</taxon>
        <taxon>Bacilli</taxon>
        <taxon>Bacillales</taxon>
        <taxon>Staphylococcaceae</taxon>
        <taxon>Staphylococcus</taxon>
    </lineage>
</organism>
<protein>
    <recommendedName>
        <fullName>Lactose phosphotransferase system repressor</fullName>
    </recommendedName>
</protein>
<gene>
    <name type="primary">lacR</name>
    <name type="ordered locus">SAR2287</name>
</gene>
<dbReference type="EMBL" id="BX571856">
    <property type="protein sequence ID" value="CAG41265.1"/>
    <property type="molecule type" value="Genomic_DNA"/>
</dbReference>
<dbReference type="RefSeq" id="WP_001032743.1">
    <property type="nucleotide sequence ID" value="NC_002952.2"/>
</dbReference>
<dbReference type="SMR" id="Q6GEN3"/>
<dbReference type="KEGG" id="sar:SAR2287"/>
<dbReference type="HOGENOM" id="CLU_060699_1_0_9"/>
<dbReference type="Proteomes" id="UP000000596">
    <property type="component" value="Chromosome"/>
</dbReference>
<dbReference type="GO" id="GO:0003677">
    <property type="term" value="F:DNA binding"/>
    <property type="evidence" value="ECO:0007669"/>
    <property type="project" value="UniProtKB-KW"/>
</dbReference>
<dbReference type="GO" id="GO:0003700">
    <property type="term" value="F:DNA-binding transcription factor activity"/>
    <property type="evidence" value="ECO:0007669"/>
    <property type="project" value="InterPro"/>
</dbReference>
<dbReference type="GO" id="GO:0005988">
    <property type="term" value="P:lactose metabolic process"/>
    <property type="evidence" value="ECO:0007669"/>
    <property type="project" value="UniProtKB-KW"/>
</dbReference>
<dbReference type="Gene3D" id="3.40.50.1360">
    <property type="match status" value="1"/>
</dbReference>
<dbReference type="Gene3D" id="1.10.10.10">
    <property type="entry name" value="Winged helix-like DNA-binding domain superfamily/Winged helix DNA-binding domain"/>
    <property type="match status" value="1"/>
</dbReference>
<dbReference type="InterPro" id="IPR050313">
    <property type="entry name" value="Carb_Metab_HTH_regulators"/>
</dbReference>
<dbReference type="InterPro" id="IPR014036">
    <property type="entry name" value="DeoR-like_C"/>
</dbReference>
<dbReference type="InterPro" id="IPR001034">
    <property type="entry name" value="DeoR_HTH"/>
</dbReference>
<dbReference type="InterPro" id="IPR037171">
    <property type="entry name" value="NagB/RpiA_transferase-like"/>
</dbReference>
<dbReference type="InterPro" id="IPR018356">
    <property type="entry name" value="Tscrpt_reg_HTH_DeoR_CS"/>
</dbReference>
<dbReference type="InterPro" id="IPR036388">
    <property type="entry name" value="WH-like_DNA-bd_sf"/>
</dbReference>
<dbReference type="InterPro" id="IPR036390">
    <property type="entry name" value="WH_DNA-bd_sf"/>
</dbReference>
<dbReference type="PANTHER" id="PTHR30363:SF4">
    <property type="entry name" value="GLYCEROL-3-PHOSPHATE REGULON REPRESSOR"/>
    <property type="match status" value="1"/>
</dbReference>
<dbReference type="PANTHER" id="PTHR30363">
    <property type="entry name" value="HTH-TYPE TRANSCRIPTIONAL REGULATOR SRLR-RELATED"/>
    <property type="match status" value="1"/>
</dbReference>
<dbReference type="Pfam" id="PF00455">
    <property type="entry name" value="DeoRC"/>
    <property type="match status" value="1"/>
</dbReference>
<dbReference type="Pfam" id="PF08220">
    <property type="entry name" value="HTH_DeoR"/>
    <property type="match status" value="1"/>
</dbReference>
<dbReference type="PRINTS" id="PR00037">
    <property type="entry name" value="HTHLACR"/>
</dbReference>
<dbReference type="SMART" id="SM01134">
    <property type="entry name" value="DeoRC"/>
    <property type="match status" value="1"/>
</dbReference>
<dbReference type="SMART" id="SM00420">
    <property type="entry name" value="HTH_DEOR"/>
    <property type="match status" value="1"/>
</dbReference>
<dbReference type="SUPFAM" id="SSF100950">
    <property type="entry name" value="NagB/RpiA/CoA transferase-like"/>
    <property type="match status" value="1"/>
</dbReference>
<dbReference type="SUPFAM" id="SSF46785">
    <property type="entry name" value="Winged helix' DNA-binding domain"/>
    <property type="match status" value="1"/>
</dbReference>
<dbReference type="PROSITE" id="PS00894">
    <property type="entry name" value="HTH_DEOR_1"/>
    <property type="match status" value="1"/>
</dbReference>
<dbReference type="PROSITE" id="PS51000">
    <property type="entry name" value="HTH_DEOR_2"/>
    <property type="match status" value="1"/>
</dbReference>
<sequence length="251" mass="28577">MNKHERLDEIAKLVNKKGTIRTNEIVEGLNVSDMTVRRDLIELENKGILTKIHGGARSNSTFQYKEISHKEKHTRQIAEKRFIARKAASLIEDGDTLFFGPGTTVELLAEEVNHHTLTIITNCLPVYKILLEKQTAHFRVYLIGGEMRHITEAFVGEMANAMLEKLRFSKMFFSSNAVNKGAVMTSTLDEAYTQQLALSNSIEKYLLIDHTKVGKEDFTSFCQLNELTAVVMDYEDEEKVETIKTYIEVVD</sequence>
<comment type="function">
    <text evidence="1">Repressor of the lactose catabolism operon. Galactose-6-phosphate is the inducer (By similarity).</text>
</comment>
<name>LACR_STAAR</name>
<reference key="1">
    <citation type="journal article" date="2004" name="Proc. Natl. Acad. Sci. U.S.A.">
        <title>Complete genomes of two clinical Staphylococcus aureus strains: evidence for the rapid evolution of virulence and drug resistance.</title>
        <authorList>
            <person name="Holden M.T.G."/>
            <person name="Feil E.J."/>
            <person name="Lindsay J.A."/>
            <person name="Peacock S.J."/>
            <person name="Day N.P.J."/>
            <person name="Enright M.C."/>
            <person name="Foster T.J."/>
            <person name="Moore C.E."/>
            <person name="Hurst L."/>
            <person name="Atkin R."/>
            <person name="Barron A."/>
            <person name="Bason N."/>
            <person name="Bentley S.D."/>
            <person name="Chillingworth C."/>
            <person name="Chillingworth T."/>
            <person name="Churcher C."/>
            <person name="Clark L."/>
            <person name="Corton C."/>
            <person name="Cronin A."/>
            <person name="Doggett J."/>
            <person name="Dowd L."/>
            <person name="Feltwell T."/>
            <person name="Hance Z."/>
            <person name="Harris B."/>
            <person name="Hauser H."/>
            <person name="Holroyd S."/>
            <person name="Jagels K."/>
            <person name="James K.D."/>
            <person name="Lennard N."/>
            <person name="Line A."/>
            <person name="Mayes R."/>
            <person name="Moule S."/>
            <person name="Mungall K."/>
            <person name="Ormond D."/>
            <person name="Quail M.A."/>
            <person name="Rabbinowitsch E."/>
            <person name="Rutherford K.M."/>
            <person name="Sanders M."/>
            <person name="Sharp S."/>
            <person name="Simmonds M."/>
            <person name="Stevens K."/>
            <person name="Whitehead S."/>
            <person name="Barrell B.G."/>
            <person name="Spratt B.G."/>
            <person name="Parkhill J."/>
        </authorList>
    </citation>
    <scope>NUCLEOTIDE SEQUENCE [LARGE SCALE GENOMIC DNA]</scope>
    <source>
        <strain>MRSA252</strain>
    </source>
</reference>
<evidence type="ECO:0000250" key="1"/>
<evidence type="ECO:0000255" key="2">
    <source>
        <dbReference type="PROSITE-ProRule" id="PRU00349"/>
    </source>
</evidence>
<proteinExistence type="inferred from homology"/>
<accession>Q6GEN3</accession>
<feature type="chain" id="PRO_0000050260" description="Lactose phosphotransferase system repressor">
    <location>
        <begin position="1"/>
        <end position="251"/>
    </location>
</feature>
<feature type="domain" description="HTH deoR-type" evidence="2">
    <location>
        <begin position="3"/>
        <end position="58"/>
    </location>
</feature>
<feature type="DNA-binding region" description="H-T-H motif" evidence="2">
    <location>
        <begin position="20"/>
        <end position="39"/>
    </location>
</feature>